<name>RLMH_METHJ</name>
<dbReference type="EC" id="2.1.1.177" evidence="1"/>
<dbReference type="EMBL" id="CP000254">
    <property type="protein sequence ID" value="ABD42292.1"/>
    <property type="molecule type" value="Genomic_DNA"/>
</dbReference>
<dbReference type="RefSeq" id="WP_011449549.1">
    <property type="nucleotide sequence ID" value="NC_007796.1"/>
</dbReference>
<dbReference type="SMR" id="Q2FTV8"/>
<dbReference type="STRING" id="323259.Mhun_2595"/>
<dbReference type="EnsemblBacteria" id="ABD42292">
    <property type="protein sequence ID" value="ABD42292"/>
    <property type="gene ID" value="Mhun_2595"/>
</dbReference>
<dbReference type="GeneID" id="3923212"/>
<dbReference type="KEGG" id="mhu:Mhun_2595"/>
<dbReference type="eggNOG" id="arCOG05111">
    <property type="taxonomic scope" value="Archaea"/>
</dbReference>
<dbReference type="HOGENOM" id="CLU_100552_0_0_2"/>
<dbReference type="InParanoid" id="Q2FTV8"/>
<dbReference type="OrthoDB" id="111266at2157"/>
<dbReference type="Proteomes" id="UP000001941">
    <property type="component" value="Chromosome"/>
</dbReference>
<dbReference type="GO" id="GO:0005737">
    <property type="term" value="C:cytoplasm"/>
    <property type="evidence" value="ECO:0007669"/>
    <property type="project" value="UniProtKB-SubCell"/>
</dbReference>
<dbReference type="GO" id="GO:0070038">
    <property type="term" value="F:rRNA (pseudouridine-N3-)-methyltransferase activity"/>
    <property type="evidence" value="ECO:0007669"/>
    <property type="project" value="UniProtKB-UniRule"/>
</dbReference>
<dbReference type="CDD" id="cd18081">
    <property type="entry name" value="RlmH-like"/>
    <property type="match status" value="1"/>
</dbReference>
<dbReference type="Gene3D" id="3.40.1280.10">
    <property type="match status" value="1"/>
</dbReference>
<dbReference type="HAMAP" id="MF_00658">
    <property type="entry name" value="23SrRNA_methyltr_H"/>
    <property type="match status" value="1"/>
</dbReference>
<dbReference type="InterPro" id="IPR029028">
    <property type="entry name" value="Alpha/beta_knot_MTases"/>
</dbReference>
<dbReference type="InterPro" id="IPR003742">
    <property type="entry name" value="RlmH-like"/>
</dbReference>
<dbReference type="InterPro" id="IPR029026">
    <property type="entry name" value="tRNA_m1G_MTases_N"/>
</dbReference>
<dbReference type="PANTHER" id="PTHR33603">
    <property type="entry name" value="METHYLTRANSFERASE"/>
    <property type="match status" value="1"/>
</dbReference>
<dbReference type="PANTHER" id="PTHR33603:SF1">
    <property type="entry name" value="RIBOSOMAL RNA LARGE SUBUNIT METHYLTRANSFERASE H"/>
    <property type="match status" value="1"/>
</dbReference>
<dbReference type="Pfam" id="PF02590">
    <property type="entry name" value="SPOUT_MTase"/>
    <property type="match status" value="1"/>
</dbReference>
<dbReference type="PIRSF" id="PIRSF004505">
    <property type="entry name" value="MT_bac"/>
    <property type="match status" value="1"/>
</dbReference>
<dbReference type="SUPFAM" id="SSF75217">
    <property type="entry name" value="alpha/beta knot"/>
    <property type="match status" value="1"/>
</dbReference>
<comment type="function">
    <text evidence="1">Specifically methylates the pseudouridine at position 1915 (m3Psi1915) in 23S rRNA.</text>
</comment>
<comment type="catalytic activity">
    <reaction evidence="1">
        <text>pseudouridine(1915) in 23S rRNA + S-adenosyl-L-methionine = N(3)-methylpseudouridine(1915) in 23S rRNA + S-adenosyl-L-homocysteine + H(+)</text>
        <dbReference type="Rhea" id="RHEA:42752"/>
        <dbReference type="Rhea" id="RHEA-COMP:10221"/>
        <dbReference type="Rhea" id="RHEA-COMP:10222"/>
        <dbReference type="ChEBI" id="CHEBI:15378"/>
        <dbReference type="ChEBI" id="CHEBI:57856"/>
        <dbReference type="ChEBI" id="CHEBI:59789"/>
        <dbReference type="ChEBI" id="CHEBI:65314"/>
        <dbReference type="ChEBI" id="CHEBI:74486"/>
        <dbReference type="EC" id="2.1.1.177"/>
    </reaction>
</comment>
<comment type="subcellular location">
    <subcellularLocation>
        <location evidence="1">Cytoplasm</location>
    </subcellularLocation>
</comment>
<comment type="similarity">
    <text evidence="1">Belongs to the RNA methyltransferase RlmH family.</text>
</comment>
<sequence length="159" mass="17920">MVRIRIRAIGKIKESFIRDAIADYAKRMCSFCQVECIEYPEAPVPDTHPSTIEMACVSEGEKLCSGIDSLDYVIILDRTGKQVSSEGLAEVIRRCEIEGPYQLVFIIGGPHGLSKDCLQKGNIILSLSAMTFPHQIARLLLYEQLYRAFTIIRGLPYHR</sequence>
<keyword id="KW-0963">Cytoplasm</keyword>
<keyword id="KW-0489">Methyltransferase</keyword>
<keyword id="KW-1185">Reference proteome</keyword>
<keyword id="KW-0698">rRNA processing</keyword>
<keyword id="KW-0949">S-adenosyl-L-methionine</keyword>
<keyword id="KW-0808">Transferase</keyword>
<evidence type="ECO:0000255" key="1">
    <source>
        <dbReference type="HAMAP-Rule" id="MF_00658"/>
    </source>
</evidence>
<gene>
    <name evidence="1" type="primary">rlmH</name>
    <name type="ordered locus">Mhun_2595</name>
</gene>
<feature type="chain" id="PRO_0000260634" description="Putative ribosomal RNA large subunit methyltransferase H">
    <location>
        <begin position="1"/>
        <end position="159"/>
    </location>
</feature>
<feature type="binding site" evidence="1">
    <location>
        <position position="76"/>
    </location>
    <ligand>
        <name>S-adenosyl-L-methionine</name>
        <dbReference type="ChEBI" id="CHEBI:59789"/>
    </ligand>
</feature>
<feature type="binding site" evidence="1">
    <location>
        <position position="108"/>
    </location>
    <ligand>
        <name>S-adenosyl-L-methionine</name>
        <dbReference type="ChEBI" id="CHEBI:59789"/>
    </ligand>
</feature>
<feature type="binding site" evidence="1">
    <location>
        <begin position="127"/>
        <end position="132"/>
    </location>
    <ligand>
        <name>S-adenosyl-L-methionine</name>
        <dbReference type="ChEBI" id="CHEBI:59789"/>
    </ligand>
</feature>
<reference key="1">
    <citation type="journal article" date="2016" name="Stand. Genomic Sci.">
        <title>Complete genome sequence of Methanospirillum hungatei type strain JF1.</title>
        <authorList>
            <person name="Gunsalus R.P."/>
            <person name="Cook L.E."/>
            <person name="Crable B."/>
            <person name="Rohlin L."/>
            <person name="McDonald E."/>
            <person name="Mouttaki H."/>
            <person name="Sieber J.R."/>
            <person name="Poweleit N."/>
            <person name="Zhou H."/>
            <person name="Lapidus A.L."/>
            <person name="Daligault H.E."/>
            <person name="Land M."/>
            <person name="Gilna P."/>
            <person name="Ivanova N."/>
            <person name="Kyrpides N."/>
            <person name="Culley D.E."/>
            <person name="McInerney M.J."/>
        </authorList>
    </citation>
    <scope>NUCLEOTIDE SEQUENCE [LARGE SCALE GENOMIC DNA]</scope>
    <source>
        <strain>ATCC 27890 / DSM 864 / NBRC 100397 / JF-1</strain>
    </source>
</reference>
<protein>
    <recommendedName>
        <fullName evidence="1">Putative ribosomal RNA large subunit methyltransferase H</fullName>
        <ecNumber evidence="1">2.1.1.177</ecNumber>
    </recommendedName>
    <alternativeName>
        <fullName evidence="1">23S rRNA (pseudouridine1915-N3)-methyltransferase</fullName>
    </alternativeName>
    <alternativeName>
        <fullName evidence="1">rRNA (pseudouridine-N3-)-methyltransferase RlmH</fullName>
    </alternativeName>
</protein>
<accession>Q2FTV8</accession>
<proteinExistence type="inferred from homology"/>
<organism>
    <name type="scientific">Methanospirillum hungatei JF-1 (strain ATCC 27890 / DSM 864 / NBRC 100397 / JF-1)</name>
    <dbReference type="NCBI Taxonomy" id="323259"/>
    <lineage>
        <taxon>Archaea</taxon>
        <taxon>Methanobacteriati</taxon>
        <taxon>Methanobacteriota</taxon>
        <taxon>Stenosarchaea group</taxon>
        <taxon>Methanomicrobia</taxon>
        <taxon>Methanomicrobiales</taxon>
        <taxon>Methanospirillaceae</taxon>
        <taxon>Methanospirillum</taxon>
    </lineage>
</organism>